<gene>
    <name evidence="1" type="primary">pepT</name>
    <name type="ordered locus">SSON_1145</name>
</gene>
<reference key="1">
    <citation type="journal article" date="2005" name="Nucleic Acids Res.">
        <title>Genome dynamics and diversity of Shigella species, the etiologic agents of bacillary dysentery.</title>
        <authorList>
            <person name="Yang F."/>
            <person name="Yang J."/>
            <person name="Zhang X."/>
            <person name="Chen L."/>
            <person name="Jiang Y."/>
            <person name="Yan Y."/>
            <person name="Tang X."/>
            <person name="Wang J."/>
            <person name="Xiong Z."/>
            <person name="Dong J."/>
            <person name="Xue Y."/>
            <person name="Zhu Y."/>
            <person name="Xu X."/>
            <person name="Sun L."/>
            <person name="Chen S."/>
            <person name="Nie H."/>
            <person name="Peng J."/>
            <person name="Xu J."/>
            <person name="Wang Y."/>
            <person name="Yuan Z."/>
            <person name="Wen Y."/>
            <person name="Yao Z."/>
            <person name="Shen Y."/>
            <person name="Qiang B."/>
            <person name="Hou Y."/>
            <person name="Yu J."/>
            <person name="Jin Q."/>
        </authorList>
    </citation>
    <scope>NUCLEOTIDE SEQUENCE [LARGE SCALE GENOMIC DNA]</scope>
    <source>
        <strain>Ss046</strain>
    </source>
</reference>
<feature type="chain" id="PRO_0000274020" description="Peptidase T">
    <location>
        <begin position="1"/>
        <end position="408"/>
    </location>
</feature>
<feature type="active site" evidence="1">
    <location>
        <position position="80"/>
    </location>
</feature>
<feature type="active site" description="Proton acceptor" evidence="1">
    <location>
        <position position="173"/>
    </location>
</feature>
<feature type="binding site" evidence="1">
    <location>
        <position position="78"/>
    </location>
    <ligand>
        <name>Zn(2+)</name>
        <dbReference type="ChEBI" id="CHEBI:29105"/>
        <label>1</label>
    </ligand>
</feature>
<feature type="binding site" evidence="1">
    <location>
        <position position="140"/>
    </location>
    <ligand>
        <name>Zn(2+)</name>
        <dbReference type="ChEBI" id="CHEBI:29105"/>
        <label>1</label>
    </ligand>
</feature>
<feature type="binding site" evidence="1">
    <location>
        <position position="140"/>
    </location>
    <ligand>
        <name>Zn(2+)</name>
        <dbReference type="ChEBI" id="CHEBI:29105"/>
        <label>2</label>
    </ligand>
</feature>
<feature type="binding site" evidence="1">
    <location>
        <position position="174"/>
    </location>
    <ligand>
        <name>Zn(2+)</name>
        <dbReference type="ChEBI" id="CHEBI:29105"/>
        <label>2</label>
    </ligand>
</feature>
<feature type="binding site" evidence="1">
    <location>
        <position position="196"/>
    </location>
    <ligand>
        <name>Zn(2+)</name>
        <dbReference type="ChEBI" id="CHEBI:29105"/>
        <label>1</label>
    </ligand>
</feature>
<feature type="binding site" evidence="1">
    <location>
        <position position="379"/>
    </location>
    <ligand>
        <name>Zn(2+)</name>
        <dbReference type="ChEBI" id="CHEBI:29105"/>
        <label>2</label>
    </ligand>
</feature>
<dbReference type="EC" id="3.4.11.4" evidence="1"/>
<dbReference type="EMBL" id="CP000038">
    <property type="protein sequence ID" value="AAZ87870.1"/>
    <property type="molecule type" value="Genomic_DNA"/>
</dbReference>
<dbReference type="RefSeq" id="WP_000359446.1">
    <property type="nucleotide sequence ID" value="NC_007384.1"/>
</dbReference>
<dbReference type="SMR" id="Q3Z2Z2"/>
<dbReference type="MEROPS" id="M20.003"/>
<dbReference type="GeneID" id="93776283"/>
<dbReference type="KEGG" id="ssn:SSON_1145"/>
<dbReference type="HOGENOM" id="CLU_053676_0_0_6"/>
<dbReference type="Proteomes" id="UP000002529">
    <property type="component" value="Chromosome"/>
</dbReference>
<dbReference type="GO" id="GO:0005829">
    <property type="term" value="C:cytosol"/>
    <property type="evidence" value="ECO:0007669"/>
    <property type="project" value="TreeGrafter"/>
</dbReference>
<dbReference type="GO" id="GO:0008237">
    <property type="term" value="F:metallopeptidase activity"/>
    <property type="evidence" value="ECO:0007669"/>
    <property type="project" value="UniProtKB-KW"/>
</dbReference>
<dbReference type="GO" id="GO:0045148">
    <property type="term" value="F:tripeptide aminopeptidase activity"/>
    <property type="evidence" value="ECO:0007669"/>
    <property type="project" value="UniProtKB-UniRule"/>
</dbReference>
<dbReference type="GO" id="GO:0008270">
    <property type="term" value="F:zinc ion binding"/>
    <property type="evidence" value="ECO:0007669"/>
    <property type="project" value="UniProtKB-UniRule"/>
</dbReference>
<dbReference type="GO" id="GO:0043171">
    <property type="term" value="P:peptide catabolic process"/>
    <property type="evidence" value="ECO:0007669"/>
    <property type="project" value="UniProtKB-UniRule"/>
</dbReference>
<dbReference type="GO" id="GO:0006508">
    <property type="term" value="P:proteolysis"/>
    <property type="evidence" value="ECO:0007669"/>
    <property type="project" value="UniProtKB-UniRule"/>
</dbReference>
<dbReference type="CDD" id="cd03892">
    <property type="entry name" value="M20_peptT"/>
    <property type="match status" value="1"/>
</dbReference>
<dbReference type="FunFam" id="3.30.70.360:FF:000002">
    <property type="entry name" value="Peptidase T"/>
    <property type="match status" value="1"/>
</dbReference>
<dbReference type="Gene3D" id="3.30.70.360">
    <property type="match status" value="1"/>
</dbReference>
<dbReference type="Gene3D" id="3.40.630.10">
    <property type="entry name" value="Zn peptidases"/>
    <property type="match status" value="1"/>
</dbReference>
<dbReference type="HAMAP" id="MF_00550">
    <property type="entry name" value="Aminopeptidase_M20"/>
    <property type="match status" value="1"/>
</dbReference>
<dbReference type="InterPro" id="IPR001261">
    <property type="entry name" value="ArgE/DapE_CS"/>
</dbReference>
<dbReference type="InterPro" id="IPR036264">
    <property type="entry name" value="Bact_exopeptidase_dim_dom"/>
</dbReference>
<dbReference type="InterPro" id="IPR002933">
    <property type="entry name" value="Peptidase_M20"/>
</dbReference>
<dbReference type="InterPro" id="IPR011650">
    <property type="entry name" value="Peptidase_M20_dimer"/>
</dbReference>
<dbReference type="InterPro" id="IPR010161">
    <property type="entry name" value="Peptidase_M20B"/>
</dbReference>
<dbReference type="NCBIfam" id="TIGR01882">
    <property type="entry name" value="peptidase-T"/>
    <property type="match status" value="1"/>
</dbReference>
<dbReference type="NCBIfam" id="NF003976">
    <property type="entry name" value="PRK05469.1"/>
    <property type="match status" value="1"/>
</dbReference>
<dbReference type="NCBIfam" id="NF009920">
    <property type="entry name" value="PRK13381.1"/>
    <property type="match status" value="1"/>
</dbReference>
<dbReference type="PANTHER" id="PTHR42994">
    <property type="entry name" value="PEPTIDASE T"/>
    <property type="match status" value="1"/>
</dbReference>
<dbReference type="PANTHER" id="PTHR42994:SF1">
    <property type="entry name" value="PEPTIDASE T"/>
    <property type="match status" value="1"/>
</dbReference>
<dbReference type="Pfam" id="PF07687">
    <property type="entry name" value="M20_dimer"/>
    <property type="match status" value="1"/>
</dbReference>
<dbReference type="Pfam" id="PF01546">
    <property type="entry name" value="Peptidase_M20"/>
    <property type="match status" value="1"/>
</dbReference>
<dbReference type="PIRSF" id="PIRSF037215">
    <property type="entry name" value="Peptidase_M20B"/>
    <property type="match status" value="1"/>
</dbReference>
<dbReference type="SUPFAM" id="SSF55031">
    <property type="entry name" value="Bacterial exopeptidase dimerisation domain"/>
    <property type="match status" value="1"/>
</dbReference>
<dbReference type="SUPFAM" id="SSF53187">
    <property type="entry name" value="Zn-dependent exopeptidases"/>
    <property type="match status" value="1"/>
</dbReference>
<dbReference type="PROSITE" id="PS00758">
    <property type="entry name" value="ARGE_DAPE_CPG2_1"/>
    <property type="match status" value="1"/>
</dbReference>
<dbReference type="PROSITE" id="PS00759">
    <property type="entry name" value="ARGE_DAPE_CPG2_2"/>
    <property type="match status" value="1"/>
</dbReference>
<name>PEPT_SHISS</name>
<evidence type="ECO:0000255" key="1">
    <source>
        <dbReference type="HAMAP-Rule" id="MF_00550"/>
    </source>
</evidence>
<organism>
    <name type="scientific">Shigella sonnei (strain Ss046)</name>
    <dbReference type="NCBI Taxonomy" id="300269"/>
    <lineage>
        <taxon>Bacteria</taxon>
        <taxon>Pseudomonadati</taxon>
        <taxon>Pseudomonadota</taxon>
        <taxon>Gammaproteobacteria</taxon>
        <taxon>Enterobacterales</taxon>
        <taxon>Enterobacteriaceae</taxon>
        <taxon>Shigella</taxon>
    </lineage>
</organism>
<protein>
    <recommendedName>
        <fullName evidence="1">Peptidase T</fullName>
        <ecNumber evidence="1">3.4.11.4</ecNumber>
    </recommendedName>
    <alternativeName>
        <fullName evidence="1">Aminotripeptidase</fullName>
        <shortName evidence="1">Tripeptidase</shortName>
    </alternativeName>
    <alternativeName>
        <fullName evidence="1">Tripeptide aminopeptidase</fullName>
    </alternativeName>
</protein>
<sequence>MDKLLERFLNYVSLDTQSKAGVRQVPSTEGQWKLLHLLKEQLEEMGLINVTLSEKGTLMATLPANVPGDIPAIGFISHVDTSPDCSGKNVNPQIVENYRGGDIALGIGDEVLSPVMFPVLHQLLGQTLITTDGKTLLGADDKAGIAEIMTALAVLQQKNIPHGDIRVAFTPDEEVGKGAKHFDVDAFDARWAYTVDGGGVGELEFENFNAASVNIKIVGNNVHPGTAKGVMVNALSLAARIHAEVPADESPEMTEGYEGFYHLASMKGTVERADMHYIIRDFDRKQFEARKRKMMEIAKKVGKGLHPDCYIELVIEDSYYNMREKVVEHPHILDIAQQAMRDCDIEPELKPIRGGTDGAQLSFMGLPCPNLFTGGYNYHGKHEFVTLEGMEKAVQVIVRIAELTAQRK</sequence>
<comment type="function">
    <text evidence="1">Cleaves the N-terminal amino acid of tripeptides.</text>
</comment>
<comment type="catalytic activity">
    <reaction evidence="1">
        <text>Release of the N-terminal residue from a tripeptide.</text>
        <dbReference type="EC" id="3.4.11.4"/>
    </reaction>
</comment>
<comment type="cofactor">
    <cofactor evidence="1">
        <name>Zn(2+)</name>
        <dbReference type="ChEBI" id="CHEBI:29105"/>
    </cofactor>
    <text evidence="1">Binds 2 Zn(2+) ions per subunit.</text>
</comment>
<comment type="subcellular location">
    <subcellularLocation>
        <location evidence="1">Cytoplasm</location>
    </subcellularLocation>
</comment>
<comment type="similarity">
    <text evidence="1">Belongs to the peptidase M20B family.</text>
</comment>
<keyword id="KW-0031">Aminopeptidase</keyword>
<keyword id="KW-0963">Cytoplasm</keyword>
<keyword id="KW-0378">Hydrolase</keyword>
<keyword id="KW-0479">Metal-binding</keyword>
<keyword id="KW-0482">Metalloprotease</keyword>
<keyword id="KW-0645">Protease</keyword>
<keyword id="KW-1185">Reference proteome</keyword>
<keyword id="KW-0862">Zinc</keyword>
<accession>Q3Z2Z2</accession>
<proteinExistence type="inferred from homology"/>